<organism>
    <name type="scientific">Vaccinia virus (strain Copenhagen)</name>
    <name type="common">VACV</name>
    <dbReference type="NCBI Taxonomy" id="10249"/>
    <lineage>
        <taxon>Viruses</taxon>
        <taxon>Varidnaviria</taxon>
        <taxon>Bamfordvirae</taxon>
        <taxon>Nucleocytoviricota</taxon>
        <taxon>Pokkesviricetes</taxon>
        <taxon>Chitovirales</taxon>
        <taxon>Poxviridae</taxon>
        <taxon>Chordopoxvirinae</taxon>
        <taxon>Orthopoxvirus</taxon>
        <taxon>Vaccinia virus</taxon>
    </lineage>
</organism>
<proteinExistence type="inferred from homology"/>
<name>C13_VACCC</name>
<keyword id="KW-0244">Early protein</keyword>
<keyword id="KW-1185">Reference proteome</keyword>
<gene>
    <name type="ORF">C13L</name>
</gene>
<sequence>MMIYGLIACLIFVTSSIASPPITEDKSFNSVEVLVSLFRDDQKDYTVTSQFNNYTIDTKDWTIHT</sequence>
<evidence type="ECO:0000305" key="1"/>
<organismHost>
    <name type="scientific">Homo sapiens</name>
    <name type="common">Human</name>
    <dbReference type="NCBI Taxonomy" id="9606"/>
</organismHost>
<reference key="1">
    <citation type="journal article" date="1990" name="Virology">
        <title>The complete DNA sequence of vaccinia virus.</title>
        <authorList>
            <person name="Goebel S.J."/>
            <person name="Johnson G.P."/>
            <person name="Perkus M.E."/>
            <person name="Davis S.W."/>
            <person name="Winslow J.P."/>
            <person name="Paoletti E."/>
        </authorList>
    </citation>
    <scope>NUCLEOTIDE SEQUENCE [LARGE SCALE GENOMIC DNA]</scope>
</reference>
<reference key="2">
    <citation type="journal article" date="1990" name="Virology">
        <title>Appendix to 'The complete DNA sequence of vaccinia virus'.</title>
        <authorList>
            <person name="Goebel S.J."/>
            <person name="Johnson G.P."/>
            <person name="Perkus M.E."/>
            <person name="Davis S.W."/>
            <person name="Winslow J.P."/>
            <person name="Paoletti E."/>
        </authorList>
    </citation>
    <scope>NUCLEOTIDE SEQUENCE [LARGE SCALE GENOMIC DNA]</scope>
</reference>
<feature type="chain" id="PRO_0000099412" description="Protein C13">
    <location>
        <begin position="1"/>
        <end position="65"/>
    </location>
</feature>
<protein>
    <recommendedName>
        <fullName>Protein C13</fullName>
    </recommendedName>
</protein>
<dbReference type="EMBL" id="M35027">
    <property type="protein sequence ID" value="AAA47983.1"/>
    <property type="molecule type" value="Genomic_DNA"/>
</dbReference>
<dbReference type="PIR" id="A42503">
    <property type="entry name" value="A42503"/>
</dbReference>
<dbReference type="Proteomes" id="UP000008269">
    <property type="component" value="Segment"/>
</dbReference>
<accession>P21044</accession>
<comment type="similarity">
    <text evidence="1">Belongs to the poxviridae C13 protein family.</text>
</comment>